<dbReference type="EMBL" id="CP000094">
    <property type="protein sequence ID" value="ABA76795.1"/>
    <property type="molecule type" value="Genomic_DNA"/>
</dbReference>
<dbReference type="RefSeq" id="WP_009045849.1">
    <property type="nucleotide sequence ID" value="NC_007492.2"/>
</dbReference>
<dbReference type="SMR" id="Q3K609"/>
<dbReference type="GeneID" id="93406126"/>
<dbReference type="KEGG" id="pfo:Pfl01_5058"/>
<dbReference type="eggNOG" id="COG0099">
    <property type="taxonomic scope" value="Bacteria"/>
</dbReference>
<dbReference type="HOGENOM" id="CLU_103849_1_2_6"/>
<dbReference type="Proteomes" id="UP000002704">
    <property type="component" value="Chromosome"/>
</dbReference>
<dbReference type="GO" id="GO:0005829">
    <property type="term" value="C:cytosol"/>
    <property type="evidence" value="ECO:0007669"/>
    <property type="project" value="TreeGrafter"/>
</dbReference>
<dbReference type="GO" id="GO:0015935">
    <property type="term" value="C:small ribosomal subunit"/>
    <property type="evidence" value="ECO:0007669"/>
    <property type="project" value="TreeGrafter"/>
</dbReference>
<dbReference type="GO" id="GO:0019843">
    <property type="term" value="F:rRNA binding"/>
    <property type="evidence" value="ECO:0007669"/>
    <property type="project" value="UniProtKB-UniRule"/>
</dbReference>
<dbReference type="GO" id="GO:0003735">
    <property type="term" value="F:structural constituent of ribosome"/>
    <property type="evidence" value="ECO:0007669"/>
    <property type="project" value="InterPro"/>
</dbReference>
<dbReference type="GO" id="GO:0000049">
    <property type="term" value="F:tRNA binding"/>
    <property type="evidence" value="ECO:0007669"/>
    <property type="project" value="UniProtKB-UniRule"/>
</dbReference>
<dbReference type="GO" id="GO:0006412">
    <property type="term" value="P:translation"/>
    <property type="evidence" value="ECO:0007669"/>
    <property type="project" value="UniProtKB-UniRule"/>
</dbReference>
<dbReference type="FunFam" id="1.10.8.50:FF:000001">
    <property type="entry name" value="30S ribosomal protein S13"/>
    <property type="match status" value="1"/>
</dbReference>
<dbReference type="FunFam" id="4.10.910.10:FF:000001">
    <property type="entry name" value="30S ribosomal protein S13"/>
    <property type="match status" value="1"/>
</dbReference>
<dbReference type="Gene3D" id="1.10.8.50">
    <property type="match status" value="1"/>
</dbReference>
<dbReference type="Gene3D" id="4.10.910.10">
    <property type="entry name" value="30s ribosomal protein s13, domain 2"/>
    <property type="match status" value="1"/>
</dbReference>
<dbReference type="HAMAP" id="MF_01315">
    <property type="entry name" value="Ribosomal_uS13"/>
    <property type="match status" value="1"/>
</dbReference>
<dbReference type="InterPro" id="IPR027437">
    <property type="entry name" value="Rbsml_uS13_C"/>
</dbReference>
<dbReference type="InterPro" id="IPR001892">
    <property type="entry name" value="Ribosomal_uS13"/>
</dbReference>
<dbReference type="InterPro" id="IPR010979">
    <property type="entry name" value="Ribosomal_uS13-like_H2TH"/>
</dbReference>
<dbReference type="InterPro" id="IPR019980">
    <property type="entry name" value="Ribosomal_uS13_bac-type"/>
</dbReference>
<dbReference type="InterPro" id="IPR018269">
    <property type="entry name" value="Ribosomal_uS13_CS"/>
</dbReference>
<dbReference type="NCBIfam" id="TIGR03631">
    <property type="entry name" value="uS13_bact"/>
    <property type="match status" value="1"/>
</dbReference>
<dbReference type="PANTHER" id="PTHR10871">
    <property type="entry name" value="30S RIBOSOMAL PROTEIN S13/40S RIBOSOMAL PROTEIN S18"/>
    <property type="match status" value="1"/>
</dbReference>
<dbReference type="PANTHER" id="PTHR10871:SF1">
    <property type="entry name" value="SMALL RIBOSOMAL SUBUNIT PROTEIN US13M"/>
    <property type="match status" value="1"/>
</dbReference>
<dbReference type="Pfam" id="PF00416">
    <property type="entry name" value="Ribosomal_S13"/>
    <property type="match status" value="1"/>
</dbReference>
<dbReference type="PIRSF" id="PIRSF002134">
    <property type="entry name" value="Ribosomal_S13"/>
    <property type="match status" value="1"/>
</dbReference>
<dbReference type="SUPFAM" id="SSF46946">
    <property type="entry name" value="S13-like H2TH domain"/>
    <property type="match status" value="1"/>
</dbReference>
<dbReference type="PROSITE" id="PS00646">
    <property type="entry name" value="RIBOSOMAL_S13_1"/>
    <property type="match status" value="1"/>
</dbReference>
<dbReference type="PROSITE" id="PS50159">
    <property type="entry name" value="RIBOSOMAL_S13_2"/>
    <property type="match status" value="1"/>
</dbReference>
<protein>
    <recommendedName>
        <fullName evidence="1">Small ribosomal subunit protein uS13</fullName>
    </recommendedName>
    <alternativeName>
        <fullName evidence="3">30S ribosomal protein S13</fullName>
    </alternativeName>
</protein>
<gene>
    <name evidence="1" type="primary">rpsM</name>
    <name type="ordered locus">Pfl01_5058</name>
</gene>
<sequence length="118" mass="13370">MARIAGVNIPDNKHTVISLTYIYGVGRTTAQKICAETGVNPAAKIKDLSDEQIEQLRGEVAKFTTEGDLRREINMKIKRLMDLGCYRGLRHRRGLPVRGQRTKTNARTRKGPRKPIRK</sequence>
<comment type="function">
    <text evidence="1">Located at the top of the head of the 30S subunit, it contacts several helices of the 16S rRNA. In the 70S ribosome it contacts the 23S rRNA (bridge B1a) and protein L5 of the 50S subunit (bridge B1b), connecting the 2 subunits; these bridges are implicated in subunit movement. Contacts the tRNAs in the A and P-sites.</text>
</comment>
<comment type="subunit">
    <text evidence="1">Part of the 30S ribosomal subunit. Forms a loose heterodimer with protein S19. Forms two bridges to the 50S subunit in the 70S ribosome.</text>
</comment>
<comment type="similarity">
    <text evidence="1">Belongs to the universal ribosomal protein uS13 family.</text>
</comment>
<feature type="chain" id="PRO_0000230552" description="Small ribosomal subunit protein uS13">
    <location>
        <begin position="1"/>
        <end position="118"/>
    </location>
</feature>
<feature type="region of interest" description="Disordered" evidence="2">
    <location>
        <begin position="93"/>
        <end position="118"/>
    </location>
</feature>
<proteinExistence type="inferred from homology"/>
<keyword id="KW-0687">Ribonucleoprotein</keyword>
<keyword id="KW-0689">Ribosomal protein</keyword>
<keyword id="KW-0694">RNA-binding</keyword>
<keyword id="KW-0699">rRNA-binding</keyword>
<keyword id="KW-0820">tRNA-binding</keyword>
<accession>Q3K609</accession>
<reference key="1">
    <citation type="journal article" date="2009" name="Genome Biol.">
        <title>Genomic and genetic analyses of diversity and plant interactions of Pseudomonas fluorescens.</title>
        <authorList>
            <person name="Silby M.W."/>
            <person name="Cerdeno-Tarraga A.M."/>
            <person name="Vernikos G.S."/>
            <person name="Giddens S.R."/>
            <person name="Jackson R.W."/>
            <person name="Preston G.M."/>
            <person name="Zhang X.-X."/>
            <person name="Moon C.D."/>
            <person name="Gehrig S.M."/>
            <person name="Godfrey S.A.C."/>
            <person name="Knight C.G."/>
            <person name="Malone J.G."/>
            <person name="Robinson Z."/>
            <person name="Spiers A.J."/>
            <person name="Harris S."/>
            <person name="Challis G.L."/>
            <person name="Yaxley A.M."/>
            <person name="Harris D."/>
            <person name="Seeger K."/>
            <person name="Murphy L."/>
            <person name="Rutter S."/>
            <person name="Squares R."/>
            <person name="Quail M.A."/>
            <person name="Saunders E."/>
            <person name="Mavromatis K."/>
            <person name="Brettin T.S."/>
            <person name="Bentley S.D."/>
            <person name="Hothersall J."/>
            <person name="Stephens E."/>
            <person name="Thomas C.M."/>
            <person name="Parkhill J."/>
            <person name="Levy S.B."/>
            <person name="Rainey P.B."/>
            <person name="Thomson N.R."/>
        </authorList>
    </citation>
    <scope>NUCLEOTIDE SEQUENCE [LARGE SCALE GENOMIC DNA]</scope>
    <source>
        <strain>Pf0-1</strain>
    </source>
</reference>
<name>RS13_PSEPF</name>
<evidence type="ECO:0000255" key="1">
    <source>
        <dbReference type="HAMAP-Rule" id="MF_01315"/>
    </source>
</evidence>
<evidence type="ECO:0000256" key="2">
    <source>
        <dbReference type="SAM" id="MobiDB-lite"/>
    </source>
</evidence>
<evidence type="ECO:0000305" key="3"/>
<organism>
    <name type="scientific">Pseudomonas fluorescens (strain Pf0-1)</name>
    <dbReference type="NCBI Taxonomy" id="205922"/>
    <lineage>
        <taxon>Bacteria</taxon>
        <taxon>Pseudomonadati</taxon>
        <taxon>Pseudomonadota</taxon>
        <taxon>Gammaproteobacteria</taxon>
        <taxon>Pseudomonadales</taxon>
        <taxon>Pseudomonadaceae</taxon>
        <taxon>Pseudomonas</taxon>
    </lineage>
</organism>